<gene>
    <name type="ordered locus">SAUSA300_0413</name>
</gene>
<dbReference type="EMBL" id="CP000255">
    <property type="protein sequence ID" value="ABD21314.1"/>
    <property type="status" value="ALT_INIT"/>
    <property type="molecule type" value="Genomic_DNA"/>
</dbReference>
<dbReference type="SMR" id="Q2FJK2"/>
<dbReference type="KEGG" id="saa:SAUSA300_0413"/>
<dbReference type="HOGENOM" id="CLU_071589_0_1_9"/>
<dbReference type="OMA" id="DMYSIKN"/>
<dbReference type="Proteomes" id="UP000001939">
    <property type="component" value="Chromosome"/>
</dbReference>
<dbReference type="GO" id="GO:0005886">
    <property type="term" value="C:plasma membrane"/>
    <property type="evidence" value="ECO:0007669"/>
    <property type="project" value="UniProtKB-SubCell"/>
</dbReference>
<dbReference type="Gene3D" id="2.50.20.40">
    <property type="match status" value="1"/>
</dbReference>
<dbReference type="InterPro" id="IPR007595">
    <property type="entry name" value="Csa"/>
</dbReference>
<dbReference type="InterPro" id="IPR038641">
    <property type="entry name" value="Csa_sf"/>
</dbReference>
<dbReference type="NCBIfam" id="TIGR01742">
    <property type="entry name" value="SA_tandem_lipo"/>
    <property type="match status" value="1"/>
</dbReference>
<dbReference type="Pfam" id="PF04507">
    <property type="entry name" value="DUF576"/>
    <property type="match status" value="1"/>
</dbReference>
<dbReference type="PROSITE" id="PS51257">
    <property type="entry name" value="PROKAR_LIPOPROTEIN"/>
    <property type="match status" value="1"/>
</dbReference>
<protein>
    <recommendedName>
        <fullName>Uncharacterized lipoprotein SAUSA300_0413</fullName>
    </recommendedName>
</protein>
<feature type="signal peptide" evidence="1">
    <location>
        <begin position="1"/>
        <end position="22"/>
    </location>
</feature>
<feature type="chain" id="PRO_0000282078" description="Uncharacterized lipoprotein SAUSA300_0413">
    <location>
        <begin position="23"/>
        <end position="266"/>
    </location>
</feature>
<feature type="lipid moiety-binding region" description="N-palmitoyl cysteine" evidence="1">
    <location>
        <position position="23"/>
    </location>
</feature>
<feature type="lipid moiety-binding region" description="S-diacylglycerol cysteine" evidence="1">
    <location>
        <position position="23"/>
    </location>
</feature>
<comment type="subcellular location">
    <subcellularLocation>
        <location evidence="1">Cell membrane</location>
        <topology evidence="1">Lipid-anchor</topology>
    </subcellularLocation>
</comment>
<comment type="similarity">
    <text evidence="2">Belongs to the staphylococcal tandem lipoprotein family.</text>
</comment>
<comment type="sequence caution" evidence="2">
    <conflict type="erroneous initiation">
        <sequence resource="EMBL-CDS" id="ABD21314"/>
    </conflict>
</comment>
<name>Y413_STAA3</name>
<proteinExistence type="inferred from homology"/>
<keyword id="KW-1003">Cell membrane</keyword>
<keyword id="KW-0449">Lipoprotein</keyword>
<keyword id="KW-0472">Membrane</keyword>
<keyword id="KW-0564">Palmitate</keyword>
<keyword id="KW-0732">Signal</keyword>
<accession>Q2FJK2</accession>
<evidence type="ECO:0000255" key="1">
    <source>
        <dbReference type="PROSITE-ProRule" id="PRU00303"/>
    </source>
</evidence>
<evidence type="ECO:0000305" key="2"/>
<sequence>MGYLKRLVLYIVIMVMSVFIIGCDKSSDTAEKSKEDSKETQIKKSFAKTLDMYSIKNLEELYDKEGYRDGEFEKGDKGMWTIYTDFAKSNKPGELSNEGMVLYLDRNTRTAKGYYFVRTFYRKDKLPDRKNYKVEMKNNKIILLDKVEDKKLKQKIENFKFFSQYANLKELKNYSNGDVSINENVPSYDVKYKMSNKDENVKQLRSRYNIPTDKSPVLKMHIDGNLKGSSVGDRKLEIDFSKRENSHLSVIDSLDYQPAKTNKDDE</sequence>
<organism>
    <name type="scientific">Staphylococcus aureus (strain USA300)</name>
    <dbReference type="NCBI Taxonomy" id="367830"/>
    <lineage>
        <taxon>Bacteria</taxon>
        <taxon>Bacillati</taxon>
        <taxon>Bacillota</taxon>
        <taxon>Bacilli</taxon>
        <taxon>Bacillales</taxon>
        <taxon>Staphylococcaceae</taxon>
        <taxon>Staphylococcus</taxon>
    </lineage>
</organism>
<reference key="1">
    <citation type="journal article" date="2006" name="Lancet">
        <title>Complete genome sequence of USA300, an epidemic clone of community-acquired meticillin-resistant Staphylococcus aureus.</title>
        <authorList>
            <person name="Diep B.A."/>
            <person name="Gill S.R."/>
            <person name="Chang R.F."/>
            <person name="Phan T.H."/>
            <person name="Chen J.H."/>
            <person name="Davidson M.G."/>
            <person name="Lin F."/>
            <person name="Lin J."/>
            <person name="Carleton H.A."/>
            <person name="Mongodin E.F."/>
            <person name="Sensabaugh G.F."/>
            <person name="Perdreau-Remington F."/>
        </authorList>
    </citation>
    <scope>NUCLEOTIDE SEQUENCE [LARGE SCALE GENOMIC DNA]</scope>
    <source>
        <strain>USA300</strain>
    </source>
</reference>